<protein>
    <recommendedName>
        <fullName evidence="7">Probable xyloglucan galactosyltransferase GT15</fullName>
        <ecNumber evidence="7">2.4.1.-</ecNumber>
    </recommendedName>
    <alternativeName>
        <fullName evidence="6">Glycosyltransferase 15</fullName>
        <shortName evidence="6">AtGT15</shortName>
    </alternativeName>
</protein>
<name>GT15_ARATH</name>
<sequence length="479" mass="54788">MKNNNSSSVSIENHPWKKKPTTLLLFLSLLSISLLLLRLSQDKIILITTTKTTATTGTDHQRSHKSSEDDTCLGRYIYIHNLPSRFNLEIIKDCKSITRPKDKISMCKYLDNSGFGPLIGGKSSDYSPSWYATNQFMLEVIFHEKMKSYECLTRNSSLASAIYVPYYAGLDFRRHLRRRNVAARDAAGKELVKWLKKQPQWKDMSGKNHFLVTGRISRDFRRNSGSRSAWGTNFMLLSESLNLTFLSIERSLTSHNEFAIPYPTYFHPTSTPEILQWQEKIRLTNRTVLFSFAGAQRPSRNQNGVVRTEVIKQCKSSSKTCRFLDCDVNANSCDDPISLMKLFESSTFCLQPPGDSLTRKSVFDSILAGCIPVFFNQGSAYKQYLWHIPKNSSKYSVYITVKELRTGGKNKIEEILRGIPNERVVGMRENVIRLIPKIVYAKPNRNKPDGEILEDSFDVAVKGVLERIEGIRRNEFKTD</sequence>
<evidence type="ECO:0000250" key="1">
    <source>
        <dbReference type="UniProtKB" id="F4K6F1"/>
    </source>
</evidence>
<evidence type="ECO:0000250" key="2">
    <source>
        <dbReference type="UniProtKB" id="Q7XJ98"/>
    </source>
</evidence>
<evidence type="ECO:0000255" key="3"/>
<evidence type="ECO:0000255" key="4">
    <source>
        <dbReference type="PROSITE-ProRule" id="PRU00498"/>
    </source>
</evidence>
<evidence type="ECO:0000269" key="5">
    <source>
    </source>
</evidence>
<evidence type="ECO:0000303" key="6">
    <source>
    </source>
</evidence>
<evidence type="ECO:0000305" key="7"/>
<evidence type="ECO:0000312" key="8">
    <source>
        <dbReference type="Araport" id="AT2G31990"/>
    </source>
</evidence>
<feature type="chain" id="PRO_0000435997" description="Probable xyloglucan galactosyltransferase GT15">
    <location>
        <begin position="1"/>
        <end position="479"/>
    </location>
</feature>
<feature type="topological domain" description="Cytoplasmic" evidence="7">
    <location>
        <begin position="1"/>
        <end position="20"/>
    </location>
</feature>
<feature type="transmembrane region" description="Helical; Signal-anchor for type II membrane protein" evidence="3">
    <location>
        <begin position="21"/>
        <end position="40"/>
    </location>
</feature>
<feature type="topological domain" description="Lumenal" evidence="7">
    <location>
        <begin position="41"/>
        <end position="479"/>
    </location>
</feature>
<feature type="glycosylation site" description="N-linked (GlcNAc...) asparagine" evidence="4">
    <location>
        <position position="155"/>
    </location>
</feature>
<feature type="glycosylation site" description="N-linked (GlcNAc...) asparagine" evidence="4">
    <location>
        <position position="242"/>
    </location>
</feature>
<feature type="glycosylation site" description="N-linked (GlcNAc...) asparagine" evidence="4">
    <location>
        <position position="285"/>
    </location>
</feature>
<feature type="glycosylation site" description="N-linked (GlcNAc...) asparagine" evidence="4">
    <location>
        <position position="391"/>
    </location>
</feature>
<gene>
    <name evidence="6" type="primary">GT15</name>
    <name evidence="8" type="ordered locus">At2g31990</name>
</gene>
<proteinExistence type="evidence at transcript level"/>
<comment type="function">
    <text evidence="1">Functions in xyloglucan synthesis by adding side chains to the xylosylated glucan backbone. Involved in the galactosylation of hemicellulose xyloglucan.</text>
</comment>
<comment type="subcellular location">
    <subcellularLocation>
        <location evidence="2">Golgi apparatus membrane</location>
        <topology evidence="2">Single-pass type II membrane protein</topology>
    </subcellularLocation>
</comment>
<comment type="tissue specificity">
    <text evidence="5">Expressed in roots, hypocotyls, cotyledons, leaves, stems and sepals.</text>
</comment>
<comment type="similarity">
    <text evidence="7">Belongs to the glycosyltransferase 47 family.</text>
</comment>
<comment type="sequence caution" evidence="7">
    <conflict type="erroneous gene model prediction">
        <sequence resource="EMBL-CDS" id="AAD15405"/>
    </conflict>
</comment>
<dbReference type="EC" id="2.4.1.-" evidence="7"/>
<dbReference type="EMBL" id="KJ138883">
    <property type="protein sequence ID" value="AHL38823.1"/>
    <property type="molecule type" value="mRNA"/>
</dbReference>
<dbReference type="EMBL" id="AC006223">
    <property type="protein sequence ID" value="AAD15405.1"/>
    <property type="status" value="ALT_SEQ"/>
    <property type="molecule type" value="Genomic_DNA"/>
</dbReference>
<dbReference type="EMBL" id="CP002685">
    <property type="protein sequence ID" value="AEC08617.1"/>
    <property type="molecule type" value="Genomic_DNA"/>
</dbReference>
<dbReference type="EMBL" id="BT015812">
    <property type="protein sequence ID" value="AAU94375.1"/>
    <property type="molecule type" value="mRNA"/>
</dbReference>
<dbReference type="EMBL" id="BT021113">
    <property type="protein sequence ID" value="AAX12883.1"/>
    <property type="molecule type" value="mRNA"/>
</dbReference>
<dbReference type="PIR" id="F84727">
    <property type="entry name" value="F84727"/>
</dbReference>
<dbReference type="RefSeq" id="NP_001324318.1">
    <property type="nucleotide sequence ID" value="NM_001336365.1"/>
</dbReference>
<dbReference type="RefSeq" id="NP_180759.2">
    <property type="nucleotide sequence ID" value="NM_128759.3"/>
</dbReference>
<dbReference type="STRING" id="3702.Q5XF04"/>
<dbReference type="CAZy" id="GT47">
    <property type="family name" value="Glycosyltransferase Family 47"/>
</dbReference>
<dbReference type="GlyCosmos" id="Q5XF04">
    <property type="glycosylation" value="4 sites, No reported glycans"/>
</dbReference>
<dbReference type="GlyGen" id="Q5XF04">
    <property type="glycosylation" value="4 sites"/>
</dbReference>
<dbReference type="PaxDb" id="3702-AT2G31990.1"/>
<dbReference type="ProteomicsDB" id="247259"/>
<dbReference type="EnsemblPlants" id="AT2G31990.1">
    <property type="protein sequence ID" value="AT2G31990.1"/>
    <property type="gene ID" value="AT2G31990"/>
</dbReference>
<dbReference type="GeneID" id="817758"/>
<dbReference type="Gramene" id="AT2G31990.1">
    <property type="protein sequence ID" value="AT2G31990.1"/>
    <property type="gene ID" value="AT2G31990"/>
</dbReference>
<dbReference type="KEGG" id="ath:AT2G31990"/>
<dbReference type="Araport" id="AT2G31990"/>
<dbReference type="TAIR" id="AT2G31990"/>
<dbReference type="eggNOG" id="KOG1021">
    <property type="taxonomic scope" value="Eukaryota"/>
</dbReference>
<dbReference type="HOGENOM" id="CLU_012659_4_1_1"/>
<dbReference type="InParanoid" id="Q5XF04"/>
<dbReference type="PRO" id="PR:Q5XF04"/>
<dbReference type="Proteomes" id="UP000006548">
    <property type="component" value="Chromosome 2"/>
</dbReference>
<dbReference type="ExpressionAtlas" id="Q5XF04">
    <property type="expression patterns" value="baseline and differential"/>
</dbReference>
<dbReference type="GO" id="GO:0000139">
    <property type="term" value="C:Golgi membrane"/>
    <property type="evidence" value="ECO:0007669"/>
    <property type="project" value="UniProtKB-SubCell"/>
</dbReference>
<dbReference type="GO" id="GO:0016757">
    <property type="term" value="F:glycosyltransferase activity"/>
    <property type="evidence" value="ECO:0007669"/>
    <property type="project" value="UniProtKB-KW"/>
</dbReference>
<dbReference type="GO" id="GO:0006486">
    <property type="term" value="P:protein glycosylation"/>
    <property type="evidence" value="ECO:0007669"/>
    <property type="project" value="InterPro"/>
</dbReference>
<dbReference type="InterPro" id="IPR004263">
    <property type="entry name" value="Exostosin"/>
</dbReference>
<dbReference type="InterPro" id="IPR040911">
    <property type="entry name" value="Exostosin_GT47"/>
</dbReference>
<dbReference type="PANTHER" id="PTHR11062">
    <property type="entry name" value="EXOSTOSIN HEPARAN SULFATE GLYCOSYLTRANSFERASE -RELATED"/>
    <property type="match status" value="1"/>
</dbReference>
<dbReference type="PANTHER" id="PTHR11062:SF204">
    <property type="entry name" value="XYLOGLUCAN GALACTOSYLTRANSFERASE GT15-RELATED"/>
    <property type="match status" value="1"/>
</dbReference>
<dbReference type="Pfam" id="PF03016">
    <property type="entry name" value="Exostosin_GT47"/>
    <property type="match status" value="1"/>
</dbReference>
<organism>
    <name type="scientific">Arabidopsis thaliana</name>
    <name type="common">Mouse-ear cress</name>
    <dbReference type="NCBI Taxonomy" id="3702"/>
    <lineage>
        <taxon>Eukaryota</taxon>
        <taxon>Viridiplantae</taxon>
        <taxon>Streptophyta</taxon>
        <taxon>Embryophyta</taxon>
        <taxon>Tracheophyta</taxon>
        <taxon>Spermatophyta</taxon>
        <taxon>Magnoliopsida</taxon>
        <taxon>eudicotyledons</taxon>
        <taxon>Gunneridae</taxon>
        <taxon>Pentapetalae</taxon>
        <taxon>rosids</taxon>
        <taxon>malvids</taxon>
        <taxon>Brassicales</taxon>
        <taxon>Brassicaceae</taxon>
        <taxon>Camelineae</taxon>
        <taxon>Arabidopsis</taxon>
    </lineage>
</organism>
<reference key="1">
    <citation type="journal article" date="2014" name="Plant J.">
        <title>The plant glycosyltransferase clone collection for functional genomics.</title>
        <authorList>
            <person name="Lao J."/>
            <person name="Oikawa A."/>
            <person name="Bromley J.R."/>
            <person name="McInerney P."/>
            <person name="Suttangkakul A."/>
            <person name="Smith-Moritz A.M."/>
            <person name="Plahar H."/>
            <person name="Chiu T.-Y."/>
            <person name="Gonzalez Fernandez-Nino S.M.G."/>
            <person name="Ebert B."/>
            <person name="Yang F."/>
            <person name="Christiansen K.M."/>
            <person name="Hansen S.F."/>
            <person name="Stonebloom S."/>
            <person name="Adams P.D."/>
            <person name="Ronald P.C."/>
            <person name="Hillson N.J."/>
            <person name="Hadi M.Z."/>
            <person name="Vega-Sanchez M.E."/>
            <person name="Loque D."/>
            <person name="Scheller H.V."/>
            <person name="Heazlewood J.L."/>
        </authorList>
    </citation>
    <scope>NUCLEOTIDE SEQUENCE [MRNA]</scope>
    <source>
        <strain>cv. Columbia</strain>
    </source>
</reference>
<reference key="2">
    <citation type="journal article" date="1999" name="Nature">
        <title>Sequence and analysis of chromosome 2 of the plant Arabidopsis thaliana.</title>
        <authorList>
            <person name="Lin X."/>
            <person name="Kaul S."/>
            <person name="Rounsley S.D."/>
            <person name="Shea T.P."/>
            <person name="Benito M.-I."/>
            <person name="Town C.D."/>
            <person name="Fujii C.Y."/>
            <person name="Mason T.M."/>
            <person name="Bowman C.L."/>
            <person name="Barnstead M.E."/>
            <person name="Feldblyum T.V."/>
            <person name="Buell C.R."/>
            <person name="Ketchum K.A."/>
            <person name="Lee J.J."/>
            <person name="Ronning C.M."/>
            <person name="Koo H.L."/>
            <person name="Moffat K.S."/>
            <person name="Cronin L.A."/>
            <person name="Shen M."/>
            <person name="Pai G."/>
            <person name="Van Aken S."/>
            <person name="Umayam L."/>
            <person name="Tallon L.J."/>
            <person name="Gill J.E."/>
            <person name="Adams M.D."/>
            <person name="Carrera A.J."/>
            <person name="Creasy T.H."/>
            <person name="Goodman H.M."/>
            <person name="Somerville C.R."/>
            <person name="Copenhaver G.P."/>
            <person name="Preuss D."/>
            <person name="Nierman W.C."/>
            <person name="White O."/>
            <person name="Eisen J.A."/>
            <person name="Salzberg S.L."/>
            <person name="Fraser C.M."/>
            <person name="Venter J.C."/>
        </authorList>
    </citation>
    <scope>NUCLEOTIDE SEQUENCE [LARGE SCALE GENOMIC DNA]</scope>
    <source>
        <strain>cv. Columbia</strain>
    </source>
</reference>
<reference key="3">
    <citation type="journal article" date="2017" name="Plant J.">
        <title>Araport11: a complete reannotation of the Arabidopsis thaliana reference genome.</title>
        <authorList>
            <person name="Cheng C.Y."/>
            <person name="Krishnakumar V."/>
            <person name="Chan A.P."/>
            <person name="Thibaud-Nissen F."/>
            <person name="Schobel S."/>
            <person name="Town C.D."/>
        </authorList>
    </citation>
    <scope>GENOME REANNOTATION</scope>
    <source>
        <strain>cv. Columbia</strain>
    </source>
</reference>
<reference key="4">
    <citation type="submission" date="2005-02" db="EMBL/GenBank/DDBJ databases">
        <title>Arabidopsis ORF clones.</title>
        <authorList>
            <person name="Shinn P."/>
            <person name="Chen H."/>
            <person name="Cheuk R.F."/>
            <person name="Kim C.J."/>
            <person name="Ecker J.R."/>
        </authorList>
    </citation>
    <scope>NUCLEOTIDE SEQUENCE [MRNA]</scope>
    <source>
        <strain>cv. Columbia</strain>
    </source>
</reference>
<reference key="5">
    <citation type="journal article" date="2004" name="Plant Physiol.">
        <title>Molecular analysis of 10 coding regions from Arabidopsis that are homologous to the MUR3 xyloglucan galactosyltransferase.</title>
        <authorList>
            <person name="Li X."/>
            <person name="Cordero I."/>
            <person name="Caplan J."/>
            <person name="Moelhoej M."/>
            <person name="Reiter W.D."/>
        </authorList>
    </citation>
    <scope>TISSUE SPECIFICITY</scope>
</reference>
<accession>Q5XF04</accession>
<accession>Q9SL00</accession>
<keyword id="KW-0325">Glycoprotein</keyword>
<keyword id="KW-0328">Glycosyltransferase</keyword>
<keyword id="KW-0333">Golgi apparatus</keyword>
<keyword id="KW-0472">Membrane</keyword>
<keyword id="KW-1185">Reference proteome</keyword>
<keyword id="KW-0735">Signal-anchor</keyword>
<keyword id="KW-0808">Transferase</keyword>
<keyword id="KW-0812">Transmembrane</keyword>
<keyword id="KW-1133">Transmembrane helix</keyword>